<geneLocation type="chloroplast"/>
<dbReference type="EMBL" id="AE009947">
    <property type="protein sequence ID" value="AAT44717.1"/>
    <property type="molecule type" value="Genomic_DNA"/>
</dbReference>
<dbReference type="SMR" id="Q6L376"/>
<dbReference type="GO" id="GO:0009535">
    <property type="term" value="C:chloroplast thylakoid membrane"/>
    <property type="evidence" value="ECO:0007669"/>
    <property type="project" value="UniProtKB-SubCell"/>
</dbReference>
<dbReference type="GO" id="GO:0009523">
    <property type="term" value="C:photosystem II"/>
    <property type="evidence" value="ECO:0007669"/>
    <property type="project" value="UniProtKB-KW"/>
</dbReference>
<dbReference type="GO" id="GO:0016168">
    <property type="term" value="F:chlorophyll binding"/>
    <property type="evidence" value="ECO:0007669"/>
    <property type="project" value="UniProtKB-UniRule"/>
</dbReference>
<dbReference type="GO" id="GO:0045156">
    <property type="term" value="F:electron transporter, transferring electrons within the cyclic electron transport pathway of photosynthesis activity"/>
    <property type="evidence" value="ECO:0007669"/>
    <property type="project" value="InterPro"/>
</dbReference>
<dbReference type="GO" id="GO:0009772">
    <property type="term" value="P:photosynthetic electron transport in photosystem II"/>
    <property type="evidence" value="ECO:0007669"/>
    <property type="project" value="InterPro"/>
</dbReference>
<dbReference type="FunFam" id="3.10.680.10:FF:000001">
    <property type="entry name" value="Photosystem II CP47 reaction center protein"/>
    <property type="match status" value="1"/>
</dbReference>
<dbReference type="Gene3D" id="3.10.680.10">
    <property type="entry name" value="Photosystem II CP47 reaction center protein"/>
    <property type="match status" value="1"/>
</dbReference>
<dbReference type="HAMAP" id="MF_01495">
    <property type="entry name" value="PSII_PsbB_CP47"/>
    <property type="match status" value="1"/>
</dbReference>
<dbReference type="InterPro" id="IPR000932">
    <property type="entry name" value="PS_antenna-like"/>
</dbReference>
<dbReference type="InterPro" id="IPR036001">
    <property type="entry name" value="PS_II_antenna-like_sf"/>
</dbReference>
<dbReference type="InterPro" id="IPR017486">
    <property type="entry name" value="PSII_PsbB"/>
</dbReference>
<dbReference type="NCBIfam" id="TIGR03039">
    <property type="entry name" value="PS_II_CP47"/>
    <property type="match status" value="1"/>
</dbReference>
<dbReference type="PANTHER" id="PTHR33180">
    <property type="entry name" value="PHOTOSYSTEM II CP43 REACTION CENTER PROTEIN"/>
    <property type="match status" value="1"/>
</dbReference>
<dbReference type="PANTHER" id="PTHR33180:SF37">
    <property type="entry name" value="PHOTOSYSTEM II CP43 REACTION CENTER PROTEIN"/>
    <property type="match status" value="1"/>
</dbReference>
<dbReference type="Pfam" id="PF00421">
    <property type="entry name" value="PSII"/>
    <property type="match status" value="1"/>
</dbReference>
<dbReference type="SUPFAM" id="SSF161077">
    <property type="entry name" value="Photosystem II antenna protein-like"/>
    <property type="match status" value="1"/>
</dbReference>
<organism>
    <name type="scientific">Saccharum hybrid</name>
    <name type="common">Sugarcane</name>
    <dbReference type="NCBI Taxonomy" id="15819"/>
    <lineage>
        <taxon>Eukaryota</taxon>
        <taxon>Viridiplantae</taxon>
        <taxon>Streptophyta</taxon>
        <taxon>Embryophyta</taxon>
        <taxon>Tracheophyta</taxon>
        <taxon>Spermatophyta</taxon>
        <taxon>Magnoliopsida</taxon>
        <taxon>Liliopsida</taxon>
        <taxon>Poales</taxon>
        <taxon>Poaceae</taxon>
        <taxon>PACMAD clade</taxon>
        <taxon>Panicoideae</taxon>
        <taxon>Andropogonodae</taxon>
        <taxon>Andropogoneae</taxon>
        <taxon>Saccharinae</taxon>
        <taxon>Saccharum</taxon>
    </lineage>
</organism>
<reference key="1">
    <citation type="journal article" date="2004" name="Curr. Genet.">
        <title>Structural features and transcript-editing analysis of sugarcane (Saccharum officinarum L.) chloroplast genome.</title>
        <authorList>
            <person name="Calsa T. Jr."/>
            <person name="Carraro D.M."/>
            <person name="Benatti M.R."/>
            <person name="Barbosa A.C."/>
            <person name="Kitajima J.P."/>
            <person name="Carrer H."/>
        </authorList>
    </citation>
    <scope>NUCLEOTIDE SEQUENCE [LARGE SCALE GENOMIC DNA]</scope>
    <source>
        <strain>cv. SP-80-3280</strain>
    </source>
</reference>
<proteinExistence type="inferred from homology"/>
<feature type="chain" id="PRO_0000226924" description="Photosystem II CP47 reaction center protein">
    <location>
        <begin position="1"/>
        <end position="508"/>
    </location>
</feature>
<feature type="transmembrane region" description="Helical" evidence="1">
    <location>
        <begin position="21"/>
        <end position="36"/>
    </location>
</feature>
<feature type="transmembrane region" description="Helical" evidence="1">
    <location>
        <begin position="101"/>
        <end position="115"/>
    </location>
</feature>
<feature type="transmembrane region" description="Helical" evidence="1">
    <location>
        <begin position="140"/>
        <end position="156"/>
    </location>
</feature>
<feature type="transmembrane region" description="Helical" evidence="1">
    <location>
        <begin position="203"/>
        <end position="218"/>
    </location>
</feature>
<feature type="transmembrane region" description="Helical" evidence="1">
    <location>
        <begin position="237"/>
        <end position="252"/>
    </location>
</feature>
<feature type="transmembrane region" description="Helical" evidence="1">
    <location>
        <begin position="457"/>
        <end position="472"/>
    </location>
</feature>
<gene>
    <name evidence="1" type="primary">psbB</name>
    <name type="ordered locus">PS151</name>
</gene>
<name>PSBB_SACHY</name>
<accession>Q6L376</accession>
<evidence type="ECO:0000255" key="1">
    <source>
        <dbReference type="HAMAP-Rule" id="MF_01495"/>
    </source>
</evidence>
<keyword id="KW-0148">Chlorophyll</keyword>
<keyword id="KW-0150">Chloroplast</keyword>
<keyword id="KW-0157">Chromophore</keyword>
<keyword id="KW-0472">Membrane</keyword>
<keyword id="KW-0602">Photosynthesis</keyword>
<keyword id="KW-0604">Photosystem II</keyword>
<keyword id="KW-0934">Plastid</keyword>
<keyword id="KW-0793">Thylakoid</keyword>
<keyword id="KW-0812">Transmembrane</keyword>
<keyword id="KW-1133">Transmembrane helix</keyword>
<comment type="function">
    <text evidence="1">One of the components of the core complex of photosystem II (PSII). It binds chlorophyll and helps catalyze the primary light-induced photochemical processes of PSII. PSII is a light-driven water:plastoquinone oxidoreductase, using light energy to abstract electrons from H(2)O, generating O(2) and a proton gradient subsequently used for ATP formation.</text>
</comment>
<comment type="cofactor">
    <text evidence="1">Binds multiple chlorophylls. PSII binds additional chlorophylls, carotenoids and specific lipids.</text>
</comment>
<comment type="subunit">
    <text evidence="1">PSII is composed of 1 copy each of membrane proteins PsbA, PsbB, PsbC, PsbD, PsbE, PsbF, PsbH, PsbI, PsbJ, PsbK, PsbL, PsbM, PsbT, PsbX, PsbY, PsbZ, Psb30/Ycf12, at least 3 peripheral proteins of the oxygen-evolving complex and a large number of cofactors. It forms dimeric complexes.</text>
</comment>
<comment type="subcellular location">
    <subcellularLocation>
        <location evidence="1">Plastid</location>
        <location evidence="1">Chloroplast thylakoid membrane</location>
        <topology evidence="1">Multi-pass membrane protein</topology>
    </subcellularLocation>
</comment>
<comment type="similarity">
    <text evidence="1">Belongs to the PsbB/PsbC family. PsbB subfamily.</text>
</comment>
<protein>
    <recommendedName>
        <fullName evidence="1">Photosystem II CP47 reaction center protein</fullName>
    </recommendedName>
    <alternativeName>
        <fullName evidence="1">PSII 47 kDa protein</fullName>
    </alternativeName>
    <alternativeName>
        <fullName evidence="1">Protein CP-47</fullName>
    </alternativeName>
</protein>
<sequence>MGLPWYRVHTVVLNDPGRLLSVHIMHTALVSGWAGSMALYELAVFDPSDPVLDPMWRQGMFVIPFMTRLGITNSWGGWSISGGTVTNPGIWSYEGVAGAHIVFSGLCFLAAIWHWVYWDLEIFCDERTGKPSLDLPKIFGIHLFLAGVACFGFGAFHVTGLYGPGIWVSDPYGLTGKVQAVNPAWGAEGFDPFVPGGIASHHIAAGTLGILAGLFHLSVRPPQRLYKGLRMGNIETVLSSSIAAVFFAAFVVAGTMWYGSATTPIELFGPTRYQWDQGYFQQEIYRRVSDGLAENLSLSEAWSKIPEKLAFYDYIGNNPAKGGLFRAGSMDNGDGIAVGWLGHPVFRDKEGRELFVRRMPTFFETFPVVLVDEEGIVRADVPFRRAESKYSVEQVGVTVEFYGGELNGVSYSDPATVKKYARRAQLGEIFELDRATLKSDGVFRSSPRGWFTFGHATFALLFFFGHIWHGARTLFRDVFAGIDPDLDAQVEFGTFQKVGDPTTRRQAA</sequence>